<organism>
    <name type="scientific">Corynebacterium urealyticum (strain ATCC 43042 / DSM 7109)</name>
    <dbReference type="NCBI Taxonomy" id="504474"/>
    <lineage>
        <taxon>Bacteria</taxon>
        <taxon>Bacillati</taxon>
        <taxon>Actinomycetota</taxon>
        <taxon>Actinomycetes</taxon>
        <taxon>Mycobacteriales</taxon>
        <taxon>Corynebacteriaceae</taxon>
        <taxon>Corynebacterium</taxon>
    </lineage>
</organism>
<dbReference type="EMBL" id="AM942444">
    <property type="protein sequence ID" value="CAQ04281.1"/>
    <property type="molecule type" value="Genomic_DNA"/>
</dbReference>
<dbReference type="RefSeq" id="WP_012359581.1">
    <property type="nucleotide sequence ID" value="NC_010545.1"/>
</dbReference>
<dbReference type="SMR" id="B1VEU2"/>
<dbReference type="STRING" id="504474.cu0321"/>
<dbReference type="GeneID" id="60605124"/>
<dbReference type="KEGG" id="cur:cu0321"/>
<dbReference type="eggNOG" id="COG0092">
    <property type="taxonomic scope" value="Bacteria"/>
</dbReference>
<dbReference type="HOGENOM" id="CLU_058591_0_2_11"/>
<dbReference type="Proteomes" id="UP000001727">
    <property type="component" value="Chromosome"/>
</dbReference>
<dbReference type="GO" id="GO:0022627">
    <property type="term" value="C:cytosolic small ribosomal subunit"/>
    <property type="evidence" value="ECO:0007669"/>
    <property type="project" value="TreeGrafter"/>
</dbReference>
<dbReference type="GO" id="GO:0003729">
    <property type="term" value="F:mRNA binding"/>
    <property type="evidence" value="ECO:0007669"/>
    <property type="project" value="UniProtKB-UniRule"/>
</dbReference>
<dbReference type="GO" id="GO:0019843">
    <property type="term" value="F:rRNA binding"/>
    <property type="evidence" value="ECO:0007669"/>
    <property type="project" value="UniProtKB-UniRule"/>
</dbReference>
<dbReference type="GO" id="GO:0003735">
    <property type="term" value="F:structural constituent of ribosome"/>
    <property type="evidence" value="ECO:0007669"/>
    <property type="project" value="InterPro"/>
</dbReference>
<dbReference type="GO" id="GO:0006412">
    <property type="term" value="P:translation"/>
    <property type="evidence" value="ECO:0007669"/>
    <property type="project" value="UniProtKB-UniRule"/>
</dbReference>
<dbReference type="CDD" id="cd02412">
    <property type="entry name" value="KH-II_30S_S3"/>
    <property type="match status" value="1"/>
</dbReference>
<dbReference type="FunFam" id="3.30.1140.32:FF:000002">
    <property type="entry name" value="30S ribosomal protein S3"/>
    <property type="match status" value="1"/>
</dbReference>
<dbReference type="FunFam" id="3.30.300.20:FF:000001">
    <property type="entry name" value="30S ribosomal protein S3"/>
    <property type="match status" value="1"/>
</dbReference>
<dbReference type="Gene3D" id="3.30.300.20">
    <property type="match status" value="1"/>
</dbReference>
<dbReference type="Gene3D" id="3.30.1140.32">
    <property type="entry name" value="Ribosomal protein S3, C-terminal domain"/>
    <property type="match status" value="1"/>
</dbReference>
<dbReference type="HAMAP" id="MF_01309_B">
    <property type="entry name" value="Ribosomal_uS3_B"/>
    <property type="match status" value="1"/>
</dbReference>
<dbReference type="InterPro" id="IPR004087">
    <property type="entry name" value="KH_dom"/>
</dbReference>
<dbReference type="InterPro" id="IPR015946">
    <property type="entry name" value="KH_dom-like_a/b"/>
</dbReference>
<dbReference type="InterPro" id="IPR004044">
    <property type="entry name" value="KH_dom_type_2"/>
</dbReference>
<dbReference type="InterPro" id="IPR009019">
    <property type="entry name" value="KH_sf_prok-type"/>
</dbReference>
<dbReference type="InterPro" id="IPR036419">
    <property type="entry name" value="Ribosomal_S3_C_sf"/>
</dbReference>
<dbReference type="InterPro" id="IPR005704">
    <property type="entry name" value="Ribosomal_uS3_bac-typ"/>
</dbReference>
<dbReference type="InterPro" id="IPR001351">
    <property type="entry name" value="Ribosomal_uS3_C"/>
</dbReference>
<dbReference type="InterPro" id="IPR018280">
    <property type="entry name" value="Ribosomal_uS3_CS"/>
</dbReference>
<dbReference type="NCBIfam" id="TIGR01009">
    <property type="entry name" value="rpsC_bact"/>
    <property type="match status" value="1"/>
</dbReference>
<dbReference type="PANTHER" id="PTHR11760">
    <property type="entry name" value="30S/40S RIBOSOMAL PROTEIN S3"/>
    <property type="match status" value="1"/>
</dbReference>
<dbReference type="PANTHER" id="PTHR11760:SF19">
    <property type="entry name" value="SMALL RIBOSOMAL SUBUNIT PROTEIN US3C"/>
    <property type="match status" value="1"/>
</dbReference>
<dbReference type="Pfam" id="PF07650">
    <property type="entry name" value="KH_2"/>
    <property type="match status" value="1"/>
</dbReference>
<dbReference type="Pfam" id="PF00189">
    <property type="entry name" value="Ribosomal_S3_C"/>
    <property type="match status" value="1"/>
</dbReference>
<dbReference type="SMART" id="SM00322">
    <property type="entry name" value="KH"/>
    <property type="match status" value="1"/>
</dbReference>
<dbReference type="SUPFAM" id="SSF54814">
    <property type="entry name" value="Prokaryotic type KH domain (KH-domain type II)"/>
    <property type="match status" value="1"/>
</dbReference>
<dbReference type="SUPFAM" id="SSF54821">
    <property type="entry name" value="Ribosomal protein S3 C-terminal domain"/>
    <property type="match status" value="1"/>
</dbReference>
<dbReference type="PROSITE" id="PS50823">
    <property type="entry name" value="KH_TYPE_2"/>
    <property type="match status" value="1"/>
</dbReference>
<dbReference type="PROSITE" id="PS00548">
    <property type="entry name" value="RIBOSOMAL_S3"/>
    <property type="match status" value="1"/>
</dbReference>
<sequence length="248" mass="28143">MGQKIQPHGLRLGITSDWRSRWYADKQYADYLAEDIKIREFLSEGLERAGIANVVIERTHDRVRVDIHTARPGIVIGRRGSEADRIRGKLEKLTGKQVQLNILEVKNVDANAQLVAQSIAEQLVNRVAFRRAMRKAIQGAMRQPQVKGIKVVCSGRLGGAEMGRTERYHEGRVPLHTLRAEIDYGTHEAHTTFGRIGVKVWIYKGDVVGGRRESLMNARDERPSRGGRRERPRRGGARRQRAEKKQEG</sequence>
<comment type="function">
    <text evidence="1">Binds the lower part of the 30S subunit head. Binds mRNA in the 70S ribosome, positioning it for translation.</text>
</comment>
<comment type="subunit">
    <text evidence="1">Part of the 30S ribosomal subunit. Forms a tight complex with proteins S10 and S14.</text>
</comment>
<comment type="similarity">
    <text evidence="1">Belongs to the universal ribosomal protein uS3 family.</text>
</comment>
<proteinExistence type="inferred from homology"/>
<protein>
    <recommendedName>
        <fullName evidence="1">Small ribosomal subunit protein uS3</fullName>
    </recommendedName>
    <alternativeName>
        <fullName evidence="3">30S ribosomal protein S3</fullName>
    </alternativeName>
</protein>
<reference key="1">
    <citation type="journal article" date="2008" name="J. Biotechnol.">
        <title>The lifestyle of Corynebacterium urealyticum derived from its complete genome sequence established by pyrosequencing.</title>
        <authorList>
            <person name="Tauch A."/>
            <person name="Trost E."/>
            <person name="Tilker A."/>
            <person name="Ludewig U."/>
            <person name="Schneiker S."/>
            <person name="Goesmann A."/>
            <person name="Arnold W."/>
            <person name="Bekel T."/>
            <person name="Brinkrolf K."/>
            <person name="Brune I."/>
            <person name="Goetker S."/>
            <person name="Kalinowski J."/>
            <person name="Kamp P.-B."/>
            <person name="Lobo F.P."/>
            <person name="Viehoever P."/>
            <person name="Weisshaar B."/>
            <person name="Soriano F."/>
            <person name="Droege M."/>
            <person name="Puehler A."/>
        </authorList>
    </citation>
    <scope>NUCLEOTIDE SEQUENCE [LARGE SCALE GENOMIC DNA]</scope>
    <source>
        <strain>ATCC 43042 / DSM 7109</strain>
    </source>
</reference>
<feature type="chain" id="PRO_1000140948" description="Small ribosomal subunit protein uS3">
    <location>
        <begin position="1"/>
        <end position="248"/>
    </location>
</feature>
<feature type="domain" description="KH type-2" evidence="1">
    <location>
        <begin position="38"/>
        <end position="106"/>
    </location>
</feature>
<feature type="region of interest" description="Disordered" evidence="2">
    <location>
        <begin position="214"/>
        <end position="248"/>
    </location>
</feature>
<feature type="compositionally biased region" description="Basic and acidic residues" evidence="2">
    <location>
        <begin position="214"/>
        <end position="229"/>
    </location>
</feature>
<feature type="compositionally biased region" description="Basic residues" evidence="2">
    <location>
        <begin position="230"/>
        <end position="242"/>
    </location>
</feature>
<evidence type="ECO:0000255" key="1">
    <source>
        <dbReference type="HAMAP-Rule" id="MF_01309"/>
    </source>
</evidence>
<evidence type="ECO:0000256" key="2">
    <source>
        <dbReference type="SAM" id="MobiDB-lite"/>
    </source>
</evidence>
<evidence type="ECO:0000305" key="3"/>
<keyword id="KW-1185">Reference proteome</keyword>
<keyword id="KW-0687">Ribonucleoprotein</keyword>
<keyword id="KW-0689">Ribosomal protein</keyword>
<keyword id="KW-0694">RNA-binding</keyword>
<keyword id="KW-0699">rRNA-binding</keyword>
<gene>
    <name evidence="1" type="primary">rpsC</name>
    <name type="ordered locus">cu0321</name>
</gene>
<name>RS3_CORU7</name>
<accession>B1VEU2</accession>